<evidence type="ECO:0000255" key="1">
    <source>
        <dbReference type="HAMAP-Rule" id="MF_04071"/>
    </source>
</evidence>
<accession>Q07575</accession>
<keyword id="KW-0106">Calcium</keyword>
<keyword id="KW-1015">Disulfide bond</keyword>
<keyword id="KW-0325">Glycoprotein</keyword>
<keyword id="KW-0326">Glycosidase</keyword>
<keyword id="KW-1032">Host cell membrane</keyword>
<keyword id="KW-1043">Host membrane</keyword>
<keyword id="KW-0378">Hydrolase</keyword>
<keyword id="KW-0472">Membrane</keyword>
<keyword id="KW-0479">Metal-binding</keyword>
<keyword id="KW-0735">Signal-anchor</keyword>
<keyword id="KW-0812">Transmembrane</keyword>
<keyword id="KW-1133">Transmembrane helix</keyword>
<keyword id="KW-0946">Virion</keyword>
<dbReference type="EC" id="3.2.1.18" evidence="1"/>
<dbReference type="EMBL" id="L06578">
    <property type="protein sequence ID" value="AAA43354.1"/>
    <property type="molecule type" value="Genomic_RNA"/>
</dbReference>
<dbReference type="SMR" id="Q07575"/>
<dbReference type="CAZy" id="GH34">
    <property type="family name" value="Glycoside Hydrolase Family 34"/>
</dbReference>
<dbReference type="GlyCosmos" id="Q07575">
    <property type="glycosylation" value="8 sites, No reported glycans"/>
</dbReference>
<dbReference type="GO" id="GO:0020002">
    <property type="term" value="C:host cell plasma membrane"/>
    <property type="evidence" value="ECO:0007669"/>
    <property type="project" value="UniProtKB-SubCell"/>
</dbReference>
<dbReference type="GO" id="GO:0016020">
    <property type="term" value="C:membrane"/>
    <property type="evidence" value="ECO:0007669"/>
    <property type="project" value="UniProtKB-UniRule"/>
</dbReference>
<dbReference type="GO" id="GO:0055036">
    <property type="term" value="C:virion membrane"/>
    <property type="evidence" value="ECO:0007669"/>
    <property type="project" value="UniProtKB-SubCell"/>
</dbReference>
<dbReference type="GO" id="GO:0004308">
    <property type="term" value="F:exo-alpha-sialidase activity"/>
    <property type="evidence" value="ECO:0007669"/>
    <property type="project" value="UniProtKB-UniRule"/>
</dbReference>
<dbReference type="GO" id="GO:0046872">
    <property type="term" value="F:metal ion binding"/>
    <property type="evidence" value="ECO:0007669"/>
    <property type="project" value="UniProtKB-UniRule"/>
</dbReference>
<dbReference type="GO" id="GO:0005975">
    <property type="term" value="P:carbohydrate metabolic process"/>
    <property type="evidence" value="ECO:0007669"/>
    <property type="project" value="InterPro"/>
</dbReference>
<dbReference type="GO" id="GO:0046761">
    <property type="term" value="P:viral budding from plasma membrane"/>
    <property type="evidence" value="ECO:0007669"/>
    <property type="project" value="UniProtKB-UniRule"/>
</dbReference>
<dbReference type="Gene3D" id="2.120.10.10">
    <property type="match status" value="1"/>
</dbReference>
<dbReference type="HAMAP" id="MF_04071">
    <property type="entry name" value="INFV_NRAM"/>
    <property type="match status" value="1"/>
</dbReference>
<dbReference type="InterPro" id="IPR001860">
    <property type="entry name" value="Glyco_hydro_34"/>
</dbReference>
<dbReference type="InterPro" id="IPR036278">
    <property type="entry name" value="Sialidase_sf"/>
</dbReference>
<dbReference type="Pfam" id="PF00064">
    <property type="entry name" value="Neur"/>
    <property type="match status" value="1"/>
</dbReference>
<dbReference type="SUPFAM" id="SSF50939">
    <property type="entry name" value="Sialidases"/>
    <property type="match status" value="1"/>
</dbReference>
<sequence length="470" mass="52213">MNPNQKIIAIGSASLGILILNVILHVVSIIVTVLVLNNNGTGLNCNRTIIREYNETVRVERITQWYNTSTIEYIERPSNEYYMNNTEPLCEAQGFAPFSKDNGIRIGSRGHVFVIREPFVSCSPSECRTFFLTQGSLLNDKHSNGTMKDRSPYRTLMSVKIGQSPNVYQARFEAVAWSATACHDGKKWMTVGVTGPDNQAVAVVNYGGVPVDIINSWAGDILRTQESSCTCIKGDCYWVMTDGPANRQAKYRIFKAKDGRIIGQTDISFNGGHIEECSCYPNEGKVECICRDNWTGTNRPILVISSDLSYTVGYLCAGIPTDTPRGEDSQFTGSCTSPLGNKGYGVKGFGFRQGTDVWAGRTISRTSRSGFEIIKIRNGWTQNSKDQIRRQVIIDNLNWSGYSGSFTLPVELTKKGCLVPCFWVEMIRGKPEETTIWTSSSSIVMCGVDHKIASWSWHDGAILPFDIDKM</sequence>
<gene>
    <name evidence="1" type="primary">NA</name>
</gene>
<name>NRAM_I91A0</name>
<organismHost>
    <name type="scientific">Aves</name>
    <dbReference type="NCBI Taxonomy" id="8782"/>
</organismHost>
<organismHost>
    <name type="scientific">Equus caballus</name>
    <name type="common">Horse</name>
    <dbReference type="NCBI Taxonomy" id="9796"/>
</organismHost>
<comment type="function">
    <text evidence="1">Catalyzes the removal of terminal sialic acid residues from viral and cellular glycoconjugates. Cleaves off the terminal sialic acids on the glycosylated HA during virus budding to facilitate virus release. Additionally helps virus spread through the circulation by further removing sialic acids from the cell surface. These cleavages prevent self-aggregation and ensure the efficient spread of the progeny virus from cell to cell. Otherwise, infection would be limited to one round of replication. Described as a receptor-destroying enzyme because it cleaves a terminal sialic acid from the cellular receptors. May facilitate viral invasion of the upper airways by cleaving the sialic acid moieties on the mucin of the airway epithelial cells. Likely to plays a role in the budding process through its association with lipid rafts during intracellular transport. May additionally display a raft-association independent effect on budding. Plays a role in the determination of host range restriction on replication and virulence. Sialidase activity in late endosome/lysosome traffic seems to enhance virus replication.</text>
</comment>
<comment type="catalytic activity">
    <reaction evidence="1">
        <text>Hydrolysis of alpha-(2-&gt;3)-, alpha-(2-&gt;6)-, alpha-(2-&gt;8)- glycosidic linkages of terminal sialic acid residues in oligosaccharides, glycoproteins, glycolipids, colominic acid and synthetic substrates.</text>
        <dbReference type="EC" id="3.2.1.18"/>
    </reaction>
</comment>
<comment type="cofactor">
    <cofactor evidence="1">
        <name>Ca(2+)</name>
        <dbReference type="ChEBI" id="CHEBI:29108"/>
    </cofactor>
</comment>
<comment type="activity regulation">
    <text evidence="1">Inhibited by the neuraminidase inhibitors zanamivir (Relenza) and oseltamivir (Tamiflu). These drugs interfere with the release of progeny virus from infected cells and are effective against all influenza strains. Resistance to neuraminidase inhibitors is quite rare.</text>
</comment>
<comment type="subunit">
    <text evidence="1">Homotetramer.</text>
</comment>
<comment type="subcellular location">
    <subcellularLocation>
        <location evidence="1">Virion membrane</location>
    </subcellularLocation>
    <subcellularLocation>
        <location evidence="1">Host apical cell membrane</location>
        <topology evidence="1">Single-pass type II membrane protein</topology>
    </subcellularLocation>
    <text evidence="1">Preferentially accumulates at the apical plasma membrane in infected polarized epithelial cells, which is the virus assembly site. Uses lipid rafts for cell surface transport and apical sorting. In the virion, forms a mushroom-shaped spike on the surface of the membrane.</text>
</comment>
<comment type="domain">
    <text evidence="1">Intact N-terminus is essential for virion morphogenesis. Possesses two apical sorting signals, one in the ectodomain, which is likely to be a glycan, and the other in the transmembrane domain. The transmembrane domain also plays a role in lipid raft association.</text>
</comment>
<comment type="PTM">
    <text evidence="1">N-glycosylated.</text>
</comment>
<comment type="miscellaneous">
    <text>The influenza A genome consist of 8 RNA segments. Genetic variation of hemagglutinin and/or neuraminidase genes results in the emergence of new influenza strains. The mechanism of variation can be the result of point mutations or the result of genetic reassortment between segments of two different strains.</text>
</comment>
<comment type="similarity">
    <text evidence="1">Belongs to the glycosyl hydrolase 34 family.</text>
</comment>
<feature type="chain" id="PRO_0000078692" description="Neuraminidase">
    <location>
        <begin position="1"/>
        <end position="470"/>
    </location>
</feature>
<feature type="topological domain" description="Intravirion" evidence="1">
    <location>
        <begin position="1"/>
        <end position="14"/>
    </location>
</feature>
<feature type="transmembrane region" description="Helical" evidence="1">
    <location>
        <begin position="15"/>
        <end position="35"/>
    </location>
</feature>
<feature type="topological domain" description="Virion surface" evidence="1">
    <location>
        <begin position="36"/>
        <end position="470"/>
    </location>
</feature>
<feature type="region of interest" description="Involved in apical transport and lipid raft association" evidence="1">
    <location>
        <begin position="11"/>
        <end position="32"/>
    </location>
</feature>
<feature type="region of interest" description="Hypervariable stalk region" evidence="1">
    <location>
        <begin position="32"/>
        <end position="86"/>
    </location>
</feature>
<feature type="region of interest" description="Head of neuraminidase" evidence="1">
    <location>
        <begin position="89"/>
        <end position="470"/>
    </location>
</feature>
<feature type="active site" description="Proton donor/acceptor" evidence="1">
    <location>
        <position position="149"/>
    </location>
</feature>
<feature type="active site" description="Nucleophile" evidence="1">
    <location>
        <position position="402"/>
    </location>
</feature>
<feature type="binding site" evidence="1">
    <location>
        <position position="116"/>
    </location>
    <ligand>
        <name>substrate</name>
    </ligand>
</feature>
<feature type="binding site" evidence="1">
    <location>
        <position position="150"/>
    </location>
    <ligand>
        <name>substrate</name>
    </ligand>
</feature>
<feature type="binding site" evidence="1">
    <location>
        <begin position="275"/>
        <end position="276"/>
    </location>
    <ligand>
        <name>substrate</name>
    </ligand>
</feature>
<feature type="binding site" evidence="1">
    <location>
        <position position="291"/>
    </location>
    <ligand>
        <name>substrate</name>
    </ligand>
</feature>
<feature type="binding site" evidence="1">
    <location>
        <position position="292"/>
    </location>
    <ligand>
        <name>Ca(2+)</name>
        <dbReference type="ChEBI" id="CHEBI:29108"/>
    </ligand>
</feature>
<feature type="binding site" evidence="1">
    <location>
        <position position="296"/>
    </location>
    <ligand>
        <name>Ca(2+)</name>
        <dbReference type="ChEBI" id="CHEBI:29108"/>
    </ligand>
</feature>
<feature type="binding site" evidence="1">
    <location>
        <position position="322"/>
    </location>
    <ligand>
        <name>Ca(2+)</name>
        <dbReference type="ChEBI" id="CHEBI:29108"/>
    </ligand>
</feature>
<feature type="binding site" evidence="1">
    <location>
        <position position="368"/>
    </location>
    <ligand>
        <name>substrate</name>
    </ligand>
</feature>
<feature type="glycosylation site" description="N-linked (GlcNAc...) asparagine; by host" evidence="1">
    <location>
        <position position="39"/>
    </location>
</feature>
<feature type="glycosylation site" description="N-linked (GlcNAc...) asparagine; by host" evidence="1">
    <location>
        <position position="46"/>
    </location>
</feature>
<feature type="glycosylation site" description="N-linked (GlcNAc...) asparagine; by host" evidence="1">
    <location>
        <position position="54"/>
    </location>
</feature>
<feature type="glycosylation site" description="N-linked (GlcNAc...) asparagine; by host" evidence="1">
    <location>
        <position position="67"/>
    </location>
</feature>
<feature type="glycosylation site" description="N-linked (GlcNAc...) asparagine; by host" evidence="1">
    <location>
        <position position="84"/>
    </location>
</feature>
<feature type="glycosylation site" description="N-linked (GlcNAc...) asparagine; by host" evidence="1">
    <location>
        <position position="144"/>
    </location>
</feature>
<feature type="glycosylation site" description="N-linked (GlcNAc...) asparagine; by host" evidence="1">
    <location>
        <position position="293"/>
    </location>
</feature>
<feature type="glycosylation site" description="N-linked (GlcNAc...) asparagine; by host" evidence="1">
    <location>
        <position position="398"/>
    </location>
</feature>
<feature type="disulfide bond" evidence="1">
    <location>
        <begin position="90"/>
        <end position="417"/>
    </location>
</feature>
<feature type="disulfide bond" evidence="1">
    <location>
        <begin position="122"/>
        <end position="127"/>
    </location>
</feature>
<feature type="disulfide bond" evidence="1">
    <location>
        <begin position="182"/>
        <end position="229"/>
    </location>
</feature>
<feature type="disulfide bond" evidence="1">
    <location>
        <begin position="231"/>
        <end position="236"/>
    </location>
</feature>
<feature type="disulfide bond" evidence="1">
    <location>
        <begin position="277"/>
        <end position="290"/>
    </location>
</feature>
<feature type="disulfide bond" evidence="1">
    <location>
        <begin position="279"/>
        <end position="288"/>
    </location>
</feature>
<feature type="disulfide bond" evidence="1">
    <location>
        <begin position="316"/>
        <end position="335"/>
    </location>
</feature>
<feature type="disulfide bond" evidence="1">
    <location>
        <begin position="421"/>
        <end position="446"/>
    </location>
</feature>
<protein>
    <recommendedName>
        <fullName evidence="1">Neuraminidase</fullName>
        <ecNumber evidence="1">3.2.1.18</ecNumber>
    </recommendedName>
</protein>
<reference key="1">
    <citation type="journal article" date="1993" name="Virology">
        <title>Phylogenetic analysis of the N8 neuraminidase gene of influenza A viruses.</title>
        <authorList>
            <person name="Saito T."/>
            <person name="Kawaoka Y."/>
            <person name="Webster R.G."/>
        </authorList>
    </citation>
    <scope>NUCLEOTIDE SEQUENCE [GENOMIC RNA]</scope>
</reference>
<reference key="2">
    <citation type="journal article" date="2004" name="Virus Res.">
        <title>Assembly and budding of influenza virus.</title>
        <authorList>
            <person name="Nayak D.P."/>
            <person name="Hui E.K."/>
            <person name="Barman S."/>
        </authorList>
    </citation>
    <scope>REVIEW</scope>
</reference>
<reference key="3">
    <citation type="journal article" date="2005" name="N. Engl. J. Med.">
        <title>Neuraminidase inhibitors for influenza.</title>
        <authorList>
            <person name="Moscona A."/>
        </authorList>
    </citation>
    <scope>REVIEW</scope>
</reference>
<reference key="4">
    <citation type="journal article" date="2005" name="Biol. Pharm. Bull.">
        <title>Sialobiology of influenza: molecular mechanism of host range variation of influenza viruses.</title>
        <authorList>
            <person name="Suzuki Y."/>
        </authorList>
    </citation>
    <scope>REVIEW</scope>
</reference>
<organism>
    <name type="scientific">Influenza A virus (strain A/Equine/Alaska/1/1991 H3N8)</name>
    <dbReference type="NCBI Taxonomy" id="387213"/>
    <lineage>
        <taxon>Viruses</taxon>
        <taxon>Riboviria</taxon>
        <taxon>Orthornavirae</taxon>
        <taxon>Negarnaviricota</taxon>
        <taxon>Polyploviricotina</taxon>
        <taxon>Insthoviricetes</taxon>
        <taxon>Articulavirales</taxon>
        <taxon>Orthomyxoviridae</taxon>
        <taxon>Alphainfluenzavirus</taxon>
        <taxon>Alphainfluenzavirus influenzae</taxon>
        <taxon>Influenza A virus</taxon>
    </lineage>
</organism>
<proteinExistence type="inferred from homology"/>